<protein>
    <recommendedName>
        <fullName evidence="2">Formamidopyrimidine-DNA glycosylase</fullName>
        <shortName evidence="2">Fapy-DNA glycosylase</shortName>
        <ecNumber evidence="2">3.2.2.23</ecNumber>
    </recommendedName>
    <alternativeName>
        <fullName evidence="2">DNA-(apurinic or apyrimidinic site) lyase MutM</fullName>
        <shortName evidence="2">AP lyase MutM</shortName>
        <ecNumber evidence="2">4.2.99.18</ecNumber>
    </alternativeName>
</protein>
<keyword id="KW-0227">DNA damage</keyword>
<keyword id="KW-0234">DNA repair</keyword>
<keyword id="KW-0238">DNA-binding</keyword>
<keyword id="KW-0326">Glycosidase</keyword>
<keyword id="KW-0378">Hydrolase</keyword>
<keyword id="KW-0456">Lyase</keyword>
<keyword id="KW-0479">Metal-binding</keyword>
<keyword id="KW-0511">Multifunctional enzyme</keyword>
<keyword id="KW-1185">Reference proteome</keyword>
<keyword id="KW-0862">Zinc</keyword>
<keyword id="KW-0863">Zinc-finger</keyword>
<organism>
    <name type="scientific">Albidiferax ferrireducens (strain ATCC BAA-621 / DSM 15236 / T118)</name>
    <name type="common">Rhodoferax ferrireducens</name>
    <dbReference type="NCBI Taxonomy" id="338969"/>
    <lineage>
        <taxon>Bacteria</taxon>
        <taxon>Pseudomonadati</taxon>
        <taxon>Pseudomonadota</taxon>
        <taxon>Betaproteobacteria</taxon>
        <taxon>Burkholderiales</taxon>
        <taxon>Comamonadaceae</taxon>
        <taxon>Rhodoferax</taxon>
    </lineage>
</organism>
<gene>
    <name evidence="2" type="primary">mutM</name>
    <name evidence="2" type="synonym">fpg</name>
    <name type="ordered locus">Rfer_1656</name>
</gene>
<reference key="1">
    <citation type="submission" date="2006-02" db="EMBL/GenBank/DDBJ databases">
        <title>Complete sequence of chromosome of Rhodoferax ferrireducens DSM 15236.</title>
        <authorList>
            <person name="Copeland A."/>
            <person name="Lucas S."/>
            <person name="Lapidus A."/>
            <person name="Barry K."/>
            <person name="Detter J.C."/>
            <person name="Glavina del Rio T."/>
            <person name="Hammon N."/>
            <person name="Israni S."/>
            <person name="Pitluck S."/>
            <person name="Brettin T."/>
            <person name="Bruce D."/>
            <person name="Han C."/>
            <person name="Tapia R."/>
            <person name="Gilna P."/>
            <person name="Kiss H."/>
            <person name="Schmutz J."/>
            <person name="Larimer F."/>
            <person name="Land M."/>
            <person name="Kyrpides N."/>
            <person name="Ivanova N."/>
            <person name="Richardson P."/>
        </authorList>
    </citation>
    <scope>NUCLEOTIDE SEQUENCE [LARGE SCALE GENOMIC DNA]</scope>
    <source>
        <strain>ATCC BAA-621 / DSM 15236 / T118</strain>
    </source>
</reference>
<feature type="initiator methionine" description="Removed" evidence="1">
    <location>
        <position position="1"/>
    </location>
</feature>
<feature type="chain" id="PRO_1000008752" description="Formamidopyrimidine-DNA glycosylase">
    <location>
        <begin position="2"/>
        <end position="271"/>
    </location>
</feature>
<feature type="zinc finger region" description="FPG-type" evidence="2">
    <location>
        <begin position="236"/>
        <end position="270"/>
    </location>
</feature>
<feature type="active site" description="Schiff-base intermediate with DNA" evidence="2">
    <location>
        <position position="2"/>
    </location>
</feature>
<feature type="active site" description="Proton donor" evidence="2">
    <location>
        <position position="3"/>
    </location>
</feature>
<feature type="active site" description="Proton donor; for beta-elimination activity" evidence="2">
    <location>
        <position position="56"/>
    </location>
</feature>
<feature type="active site" description="Proton donor; for delta-elimination activity" evidence="2">
    <location>
        <position position="260"/>
    </location>
</feature>
<feature type="binding site" evidence="2">
    <location>
        <position position="89"/>
    </location>
    <ligand>
        <name>DNA</name>
        <dbReference type="ChEBI" id="CHEBI:16991"/>
    </ligand>
</feature>
<feature type="binding site" evidence="2">
    <location>
        <position position="107"/>
    </location>
    <ligand>
        <name>DNA</name>
        <dbReference type="ChEBI" id="CHEBI:16991"/>
    </ligand>
</feature>
<feature type="binding site" evidence="2">
    <location>
        <position position="151"/>
    </location>
    <ligand>
        <name>DNA</name>
        <dbReference type="ChEBI" id="CHEBI:16991"/>
    </ligand>
</feature>
<sequence length="271" mass="29625">MPELPEVEVTRLSFAFEIAGARVISVRIGKPLRWPLGCSPTQLAGRSVQAVRRRGKYLLIDLDQGLLLVHLGMSGSLSFARQLPPAGAHDHFEMTTTLGTLRLTDPRRFGAVVYAKGEDAPEAHKLLGKLGMEPLSDDFDVDRFHDELKRRRAAIKQVLLAGDTVVGVGNIYASEALFMAGIRPTLSAARLSRPRSARLHAAIRDVLARAVATGGSTLRDFSSAKGENGHFQLEAMVYARQGQPCRVCATPIKSLRQGQRSTFYCPHCQKA</sequence>
<accession>Q21XW7</accession>
<name>FPG_ALBFT</name>
<comment type="function">
    <text evidence="2">Involved in base excision repair of DNA damaged by oxidation or by mutagenic agents. Acts as a DNA glycosylase that recognizes and removes damaged bases. Has a preference for oxidized purines, such as 7,8-dihydro-8-oxoguanine (8-oxoG). Has AP (apurinic/apyrimidinic) lyase activity and introduces nicks in the DNA strand. Cleaves the DNA backbone by beta-delta elimination to generate a single-strand break at the site of the removed base with both 3'- and 5'-phosphates.</text>
</comment>
<comment type="catalytic activity">
    <reaction evidence="2">
        <text>Hydrolysis of DNA containing ring-opened 7-methylguanine residues, releasing 2,6-diamino-4-hydroxy-5-(N-methyl)formamidopyrimidine.</text>
        <dbReference type="EC" id="3.2.2.23"/>
    </reaction>
</comment>
<comment type="catalytic activity">
    <reaction evidence="2">
        <text>2'-deoxyribonucleotide-(2'-deoxyribose 5'-phosphate)-2'-deoxyribonucleotide-DNA = a 3'-end 2'-deoxyribonucleotide-(2,3-dehydro-2,3-deoxyribose 5'-phosphate)-DNA + a 5'-end 5'-phospho-2'-deoxyribonucleoside-DNA + H(+)</text>
        <dbReference type="Rhea" id="RHEA:66592"/>
        <dbReference type="Rhea" id="RHEA-COMP:13180"/>
        <dbReference type="Rhea" id="RHEA-COMP:16897"/>
        <dbReference type="Rhea" id="RHEA-COMP:17067"/>
        <dbReference type="ChEBI" id="CHEBI:15378"/>
        <dbReference type="ChEBI" id="CHEBI:136412"/>
        <dbReference type="ChEBI" id="CHEBI:157695"/>
        <dbReference type="ChEBI" id="CHEBI:167181"/>
        <dbReference type="EC" id="4.2.99.18"/>
    </reaction>
</comment>
<comment type="cofactor">
    <cofactor evidence="2">
        <name>Zn(2+)</name>
        <dbReference type="ChEBI" id="CHEBI:29105"/>
    </cofactor>
    <text evidence="2">Binds 1 zinc ion per subunit.</text>
</comment>
<comment type="subunit">
    <text evidence="2">Monomer.</text>
</comment>
<comment type="similarity">
    <text evidence="2">Belongs to the FPG family.</text>
</comment>
<evidence type="ECO:0000250" key="1"/>
<evidence type="ECO:0000255" key="2">
    <source>
        <dbReference type="HAMAP-Rule" id="MF_00103"/>
    </source>
</evidence>
<proteinExistence type="inferred from homology"/>
<dbReference type="EC" id="3.2.2.23" evidence="2"/>
<dbReference type="EC" id="4.2.99.18" evidence="2"/>
<dbReference type="EMBL" id="CP000267">
    <property type="protein sequence ID" value="ABD69386.1"/>
    <property type="molecule type" value="Genomic_DNA"/>
</dbReference>
<dbReference type="RefSeq" id="WP_011463954.1">
    <property type="nucleotide sequence ID" value="NC_007908.1"/>
</dbReference>
<dbReference type="SMR" id="Q21XW7"/>
<dbReference type="STRING" id="338969.Rfer_1656"/>
<dbReference type="KEGG" id="rfr:Rfer_1656"/>
<dbReference type="eggNOG" id="COG0266">
    <property type="taxonomic scope" value="Bacteria"/>
</dbReference>
<dbReference type="HOGENOM" id="CLU_038423_1_1_4"/>
<dbReference type="OrthoDB" id="9800855at2"/>
<dbReference type="Proteomes" id="UP000008332">
    <property type="component" value="Chromosome"/>
</dbReference>
<dbReference type="GO" id="GO:0034039">
    <property type="term" value="F:8-oxo-7,8-dihydroguanine DNA N-glycosylase activity"/>
    <property type="evidence" value="ECO:0007669"/>
    <property type="project" value="TreeGrafter"/>
</dbReference>
<dbReference type="GO" id="GO:0140078">
    <property type="term" value="F:class I DNA-(apurinic or apyrimidinic site) endonuclease activity"/>
    <property type="evidence" value="ECO:0007669"/>
    <property type="project" value="UniProtKB-EC"/>
</dbReference>
<dbReference type="GO" id="GO:0003684">
    <property type="term" value="F:damaged DNA binding"/>
    <property type="evidence" value="ECO:0007669"/>
    <property type="project" value="InterPro"/>
</dbReference>
<dbReference type="GO" id="GO:0008270">
    <property type="term" value="F:zinc ion binding"/>
    <property type="evidence" value="ECO:0007669"/>
    <property type="project" value="UniProtKB-UniRule"/>
</dbReference>
<dbReference type="GO" id="GO:0006284">
    <property type="term" value="P:base-excision repair"/>
    <property type="evidence" value="ECO:0007669"/>
    <property type="project" value="InterPro"/>
</dbReference>
<dbReference type="CDD" id="cd08966">
    <property type="entry name" value="EcFpg-like_N"/>
    <property type="match status" value="1"/>
</dbReference>
<dbReference type="FunFam" id="1.10.8.50:FF:000003">
    <property type="entry name" value="Formamidopyrimidine-DNA glycosylase"/>
    <property type="match status" value="1"/>
</dbReference>
<dbReference type="Gene3D" id="1.10.8.50">
    <property type="match status" value="1"/>
</dbReference>
<dbReference type="Gene3D" id="3.20.190.10">
    <property type="entry name" value="MutM-like, N-terminal"/>
    <property type="match status" value="1"/>
</dbReference>
<dbReference type="HAMAP" id="MF_00103">
    <property type="entry name" value="Fapy_DNA_glycosyl"/>
    <property type="match status" value="1"/>
</dbReference>
<dbReference type="InterPro" id="IPR015886">
    <property type="entry name" value="DNA_glyclase/AP_lyase_DNA-bd"/>
</dbReference>
<dbReference type="InterPro" id="IPR015887">
    <property type="entry name" value="DNA_glyclase_Znf_dom_DNA_BS"/>
</dbReference>
<dbReference type="InterPro" id="IPR020629">
    <property type="entry name" value="Formamido-pyr_DNA_Glyclase"/>
</dbReference>
<dbReference type="InterPro" id="IPR012319">
    <property type="entry name" value="FPG_cat"/>
</dbReference>
<dbReference type="InterPro" id="IPR035937">
    <property type="entry name" value="MutM-like_N-ter"/>
</dbReference>
<dbReference type="InterPro" id="IPR010979">
    <property type="entry name" value="Ribosomal_uS13-like_H2TH"/>
</dbReference>
<dbReference type="InterPro" id="IPR000214">
    <property type="entry name" value="Znf_DNA_glyclase/AP_lyase"/>
</dbReference>
<dbReference type="InterPro" id="IPR010663">
    <property type="entry name" value="Znf_FPG/IleRS"/>
</dbReference>
<dbReference type="NCBIfam" id="TIGR00577">
    <property type="entry name" value="fpg"/>
    <property type="match status" value="1"/>
</dbReference>
<dbReference type="NCBIfam" id="NF002211">
    <property type="entry name" value="PRK01103.1"/>
    <property type="match status" value="1"/>
</dbReference>
<dbReference type="PANTHER" id="PTHR22993">
    <property type="entry name" value="FORMAMIDOPYRIMIDINE-DNA GLYCOSYLASE"/>
    <property type="match status" value="1"/>
</dbReference>
<dbReference type="PANTHER" id="PTHR22993:SF9">
    <property type="entry name" value="FORMAMIDOPYRIMIDINE-DNA GLYCOSYLASE"/>
    <property type="match status" value="1"/>
</dbReference>
<dbReference type="Pfam" id="PF01149">
    <property type="entry name" value="Fapy_DNA_glyco"/>
    <property type="match status" value="1"/>
</dbReference>
<dbReference type="Pfam" id="PF06831">
    <property type="entry name" value="H2TH"/>
    <property type="match status" value="1"/>
</dbReference>
<dbReference type="Pfam" id="PF06827">
    <property type="entry name" value="zf-FPG_IleRS"/>
    <property type="match status" value="1"/>
</dbReference>
<dbReference type="SMART" id="SM00898">
    <property type="entry name" value="Fapy_DNA_glyco"/>
    <property type="match status" value="1"/>
</dbReference>
<dbReference type="SMART" id="SM01232">
    <property type="entry name" value="H2TH"/>
    <property type="match status" value="1"/>
</dbReference>
<dbReference type="SUPFAM" id="SSF57716">
    <property type="entry name" value="Glucocorticoid receptor-like (DNA-binding domain)"/>
    <property type="match status" value="1"/>
</dbReference>
<dbReference type="SUPFAM" id="SSF81624">
    <property type="entry name" value="N-terminal domain of MutM-like DNA repair proteins"/>
    <property type="match status" value="1"/>
</dbReference>
<dbReference type="SUPFAM" id="SSF46946">
    <property type="entry name" value="S13-like H2TH domain"/>
    <property type="match status" value="1"/>
</dbReference>
<dbReference type="PROSITE" id="PS51068">
    <property type="entry name" value="FPG_CAT"/>
    <property type="match status" value="1"/>
</dbReference>
<dbReference type="PROSITE" id="PS01242">
    <property type="entry name" value="ZF_FPG_1"/>
    <property type="match status" value="1"/>
</dbReference>
<dbReference type="PROSITE" id="PS51066">
    <property type="entry name" value="ZF_FPG_2"/>
    <property type="match status" value="1"/>
</dbReference>